<keyword id="KW-0963">Cytoplasm</keyword>
<keyword id="KW-0648">Protein biosynthesis</keyword>
<keyword id="KW-1185">Reference proteome</keyword>
<evidence type="ECO:0000255" key="1">
    <source>
        <dbReference type="HAMAP-Rule" id="MF_00040"/>
    </source>
</evidence>
<name>RRF_BUCBP</name>
<accession>Q89AP1</accession>
<reference key="1">
    <citation type="journal article" date="2003" name="Proc. Natl. Acad. Sci. U.S.A.">
        <title>Reductive genome evolution in Buchnera aphidicola.</title>
        <authorList>
            <person name="van Ham R.C.H.J."/>
            <person name="Kamerbeek J."/>
            <person name="Palacios C."/>
            <person name="Rausell C."/>
            <person name="Abascal F."/>
            <person name="Bastolla U."/>
            <person name="Fernandez J.M."/>
            <person name="Jimenez L."/>
            <person name="Postigo M."/>
            <person name="Silva F.J."/>
            <person name="Tamames J."/>
            <person name="Viguera E."/>
            <person name="Latorre A."/>
            <person name="Valencia A."/>
            <person name="Moran F."/>
            <person name="Moya A."/>
        </authorList>
    </citation>
    <scope>NUCLEOTIDE SEQUENCE [LARGE SCALE GENOMIC DNA]</scope>
    <source>
        <strain>Bp</strain>
    </source>
</reference>
<comment type="function">
    <text evidence="1">Responsible for the release of ribosomes from messenger RNA at the termination of protein biosynthesis. May increase the efficiency of translation by recycling ribosomes from one round of translation to another.</text>
</comment>
<comment type="subcellular location">
    <subcellularLocation>
        <location evidence="1">Cytoplasm</location>
    </subcellularLocation>
</comment>
<comment type="similarity">
    <text evidence="1">Belongs to the RRF family.</text>
</comment>
<gene>
    <name evidence="1" type="primary">frr</name>
    <name type="ordered locus">bbp_216</name>
</gene>
<proteinExistence type="inferred from homology"/>
<protein>
    <recommendedName>
        <fullName evidence="1">Ribosome-recycling factor</fullName>
        <shortName evidence="1">RRF</shortName>
    </recommendedName>
    <alternativeName>
        <fullName evidence="1">Ribosome-releasing factor</fullName>
    </alternativeName>
</protein>
<sequence length="183" mass="21520">MERIKNFTSSKMDHCVHMFVNQLNTLRSSRASPSILDTILIDYLGQKIQLKKLSNIIVENVNTLRITLFDPKIKNNVEKAIISSKLDLIPIFINNYFQIKIPVLTEERRLQLIKLAKKMAENSRICIRNIRRLSNEKIKLFLKDKIISSDKERRLQHEVQDITNSYMEKINVILSKKEKDLLK</sequence>
<organism>
    <name type="scientific">Buchnera aphidicola subsp. Baizongia pistaciae (strain Bp)</name>
    <dbReference type="NCBI Taxonomy" id="224915"/>
    <lineage>
        <taxon>Bacteria</taxon>
        <taxon>Pseudomonadati</taxon>
        <taxon>Pseudomonadota</taxon>
        <taxon>Gammaproteobacteria</taxon>
        <taxon>Enterobacterales</taxon>
        <taxon>Erwiniaceae</taxon>
        <taxon>Buchnera</taxon>
    </lineage>
</organism>
<feature type="chain" id="PRO_0000167430" description="Ribosome-recycling factor">
    <location>
        <begin position="1"/>
        <end position="183"/>
    </location>
</feature>
<dbReference type="EMBL" id="AE016826">
    <property type="protein sequence ID" value="AAO26948.1"/>
    <property type="molecule type" value="Genomic_DNA"/>
</dbReference>
<dbReference type="RefSeq" id="WP_011091349.1">
    <property type="nucleotide sequence ID" value="NC_004545.1"/>
</dbReference>
<dbReference type="SMR" id="Q89AP1"/>
<dbReference type="STRING" id="224915.bbp_216"/>
<dbReference type="KEGG" id="bab:bbp_216"/>
<dbReference type="eggNOG" id="COG0233">
    <property type="taxonomic scope" value="Bacteria"/>
</dbReference>
<dbReference type="HOGENOM" id="CLU_073981_2_1_6"/>
<dbReference type="OrthoDB" id="9804006at2"/>
<dbReference type="Proteomes" id="UP000000601">
    <property type="component" value="Chromosome"/>
</dbReference>
<dbReference type="GO" id="GO:0005829">
    <property type="term" value="C:cytosol"/>
    <property type="evidence" value="ECO:0007669"/>
    <property type="project" value="GOC"/>
</dbReference>
<dbReference type="GO" id="GO:0043023">
    <property type="term" value="F:ribosomal large subunit binding"/>
    <property type="evidence" value="ECO:0007669"/>
    <property type="project" value="TreeGrafter"/>
</dbReference>
<dbReference type="GO" id="GO:0002184">
    <property type="term" value="P:cytoplasmic translational termination"/>
    <property type="evidence" value="ECO:0007669"/>
    <property type="project" value="TreeGrafter"/>
</dbReference>
<dbReference type="FunFam" id="1.10.132.20:FF:000001">
    <property type="entry name" value="Ribosome-recycling factor"/>
    <property type="match status" value="1"/>
</dbReference>
<dbReference type="Gene3D" id="3.30.1360.40">
    <property type="match status" value="1"/>
</dbReference>
<dbReference type="Gene3D" id="1.10.132.20">
    <property type="entry name" value="Ribosome-recycling factor"/>
    <property type="match status" value="1"/>
</dbReference>
<dbReference type="HAMAP" id="MF_00040">
    <property type="entry name" value="RRF"/>
    <property type="match status" value="1"/>
</dbReference>
<dbReference type="InterPro" id="IPR002661">
    <property type="entry name" value="Ribosome_recyc_fac"/>
</dbReference>
<dbReference type="InterPro" id="IPR023584">
    <property type="entry name" value="Ribosome_recyc_fac_dom"/>
</dbReference>
<dbReference type="InterPro" id="IPR036191">
    <property type="entry name" value="RRF_sf"/>
</dbReference>
<dbReference type="NCBIfam" id="TIGR00496">
    <property type="entry name" value="frr"/>
    <property type="match status" value="1"/>
</dbReference>
<dbReference type="PANTHER" id="PTHR20982:SF3">
    <property type="entry name" value="MITOCHONDRIAL RIBOSOME RECYCLING FACTOR PSEUDO 1"/>
    <property type="match status" value="1"/>
</dbReference>
<dbReference type="PANTHER" id="PTHR20982">
    <property type="entry name" value="RIBOSOME RECYCLING FACTOR"/>
    <property type="match status" value="1"/>
</dbReference>
<dbReference type="Pfam" id="PF01765">
    <property type="entry name" value="RRF"/>
    <property type="match status" value="1"/>
</dbReference>
<dbReference type="SUPFAM" id="SSF55194">
    <property type="entry name" value="Ribosome recycling factor, RRF"/>
    <property type="match status" value="1"/>
</dbReference>